<dbReference type="EC" id="2.3.1.-" evidence="1"/>
<dbReference type="EMBL" id="AM743169">
    <property type="protein sequence ID" value="CAQ46716.1"/>
    <property type="molecule type" value="Genomic_DNA"/>
</dbReference>
<dbReference type="RefSeq" id="WP_005413993.1">
    <property type="nucleotide sequence ID" value="NC_010943.1"/>
</dbReference>
<dbReference type="SMR" id="B2FMC1"/>
<dbReference type="ESTHER" id="strmk-metx">
    <property type="family name" value="Homoserine_transacetylase"/>
</dbReference>
<dbReference type="EnsemblBacteria" id="CAQ46716">
    <property type="protein sequence ID" value="CAQ46716"/>
    <property type="gene ID" value="Smlt3277"/>
</dbReference>
<dbReference type="KEGG" id="sml:Smlt3277"/>
<dbReference type="PATRIC" id="fig|522373.3.peg.3075"/>
<dbReference type="eggNOG" id="COG2021">
    <property type="taxonomic scope" value="Bacteria"/>
</dbReference>
<dbReference type="HOGENOM" id="CLU_028760_1_2_6"/>
<dbReference type="UniPathway" id="UPA00136">
    <property type="reaction ID" value="UER00199"/>
</dbReference>
<dbReference type="Proteomes" id="UP000008840">
    <property type="component" value="Chromosome"/>
</dbReference>
<dbReference type="GO" id="GO:0005737">
    <property type="term" value="C:cytoplasm"/>
    <property type="evidence" value="ECO:0007669"/>
    <property type="project" value="UniProtKB-SubCell"/>
</dbReference>
<dbReference type="GO" id="GO:0004414">
    <property type="term" value="F:homoserine O-acetyltransferase activity"/>
    <property type="evidence" value="ECO:0007669"/>
    <property type="project" value="TreeGrafter"/>
</dbReference>
<dbReference type="GO" id="GO:0160210">
    <property type="term" value="F:L-serine O-succinyltransferase activity"/>
    <property type="evidence" value="ECO:0007669"/>
    <property type="project" value="RHEA"/>
</dbReference>
<dbReference type="GO" id="GO:0006535">
    <property type="term" value="P:cysteine biosynthetic process from serine"/>
    <property type="evidence" value="ECO:0007669"/>
    <property type="project" value="UniProtKB-UniRule"/>
</dbReference>
<dbReference type="GO" id="GO:0009092">
    <property type="term" value="P:homoserine metabolic process"/>
    <property type="evidence" value="ECO:0007669"/>
    <property type="project" value="TreeGrafter"/>
</dbReference>
<dbReference type="GO" id="GO:0009086">
    <property type="term" value="P:methionine biosynthetic process"/>
    <property type="evidence" value="ECO:0007669"/>
    <property type="project" value="TreeGrafter"/>
</dbReference>
<dbReference type="Gene3D" id="1.10.1740.110">
    <property type="match status" value="1"/>
</dbReference>
<dbReference type="Gene3D" id="3.40.50.1820">
    <property type="entry name" value="alpha/beta hydrolase"/>
    <property type="match status" value="1"/>
</dbReference>
<dbReference type="HAMAP" id="MF_00296">
    <property type="entry name" value="MetX_acyltransf"/>
    <property type="match status" value="1"/>
</dbReference>
<dbReference type="InterPro" id="IPR000073">
    <property type="entry name" value="AB_hydrolase_1"/>
</dbReference>
<dbReference type="InterPro" id="IPR029058">
    <property type="entry name" value="AB_hydrolase_fold"/>
</dbReference>
<dbReference type="InterPro" id="IPR008220">
    <property type="entry name" value="HAT_MetX-like"/>
</dbReference>
<dbReference type="NCBIfam" id="TIGR01392">
    <property type="entry name" value="homoserO_Ac_trn"/>
    <property type="match status" value="1"/>
</dbReference>
<dbReference type="NCBIfam" id="NF001209">
    <property type="entry name" value="PRK00175.1"/>
    <property type="match status" value="1"/>
</dbReference>
<dbReference type="PANTHER" id="PTHR32268">
    <property type="entry name" value="HOMOSERINE O-ACETYLTRANSFERASE"/>
    <property type="match status" value="1"/>
</dbReference>
<dbReference type="PANTHER" id="PTHR32268:SF11">
    <property type="entry name" value="HOMOSERINE O-ACETYLTRANSFERASE"/>
    <property type="match status" value="1"/>
</dbReference>
<dbReference type="Pfam" id="PF00561">
    <property type="entry name" value="Abhydrolase_1"/>
    <property type="match status" value="1"/>
</dbReference>
<dbReference type="PIRSF" id="PIRSF000443">
    <property type="entry name" value="Homoser_Ac_trans"/>
    <property type="match status" value="1"/>
</dbReference>
<dbReference type="SUPFAM" id="SSF53474">
    <property type="entry name" value="alpha/beta-Hydrolases"/>
    <property type="match status" value="1"/>
</dbReference>
<gene>
    <name type="primary">metX</name>
    <name type="ordered locus">Smlt3277</name>
</gene>
<protein>
    <recommendedName>
        <fullName evidence="1">Serine O-succinyltransferase</fullName>
        <shortName evidence="1">SST</shortName>
        <ecNumber evidence="1">2.3.1.-</ecNumber>
    </recommendedName>
</protein>
<sequence length="370" mass="40012">MTEFIPPGTRFHALPSPFPFKRGGALHGARVAYETWGTLAADASNAILIVTGLSPDAHAAANDANPAAGWWEGMVGPGKAIDTDRWFVVCVNSLGSCKGSTGPASLNPATGQPYRLDFPELSIEDGARAAIEVVRALGIEQLACVVGNSMGGMTALAVLMLHPGIARSHVNISGSAQALPFSIAIRSLQREAIRLDPRWNGGHYDDDAYPESGMRMARKLGVITYRSALEWDGRFGRVRLDSDQTDDDPFGLEFQVESYLEGHARRFVRFFDPNCYLYLSRSMDWFDLAEYADGDVLAGLAKIRVEKALAIGANTDILFPVQQQQQVADGLRAGGADAHFIGLESPQGHDAFLVDFDRFGPAVRGFLDAL</sequence>
<evidence type="ECO:0000255" key="1">
    <source>
        <dbReference type="HAMAP-Rule" id="MF_00296"/>
    </source>
</evidence>
<name>SST_STRMK</name>
<keyword id="KW-0012">Acyltransferase</keyword>
<keyword id="KW-0028">Amino-acid biosynthesis</keyword>
<keyword id="KW-0198">Cysteine biosynthesis</keyword>
<keyword id="KW-0963">Cytoplasm</keyword>
<keyword id="KW-1185">Reference proteome</keyword>
<keyword id="KW-0808">Transferase</keyword>
<comment type="function">
    <text evidence="1">Transfers a succinyl group from succinyl-CoA to L-serine, forming succinyl-L-serine.</text>
</comment>
<comment type="catalytic activity">
    <reaction evidence="1">
        <text>succinyl-CoA + L-serine = O-succinyl-L-serine + CoA</text>
        <dbReference type="Rhea" id="RHEA:52820"/>
        <dbReference type="ChEBI" id="CHEBI:33384"/>
        <dbReference type="ChEBI" id="CHEBI:57287"/>
        <dbReference type="ChEBI" id="CHEBI:57292"/>
        <dbReference type="ChEBI" id="CHEBI:136856"/>
    </reaction>
</comment>
<comment type="pathway">
    <text evidence="1">Amino-acid biosynthesis; L-cysteine biosynthesis; L-cysteine from L-serine: step 1/2.</text>
</comment>
<comment type="subunit">
    <text evidence="1">Homodimer.</text>
</comment>
<comment type="subcellular location">
    <subcellularLocation>
        <location evidence="1">Cytoplasm</location>
    </subcellularLocation>
</comment>
<comment type="similarity">
    <text evidence="1">Belongs to the AB hydrolase superfamily. MetX family.</text>
</comment>
<feature type="chain" id="PRO_1000115236" description="Serine O-succinyltransferase">
    <location>
        <begin position="1"/>
        <end position="370"/>
    </location>
</feature>
<feature type="domain" description="AB hydrolase-1" evidence="1">
    <location>
        <begin position="46"/>
        <end position="355"/>
    </location>
</feature>
<feature type="region of interest" description="Important for substrate specificity" evidence="1">
    <location>
        <begin position="52"/>
        <end position="55"/>
    </location>
</feature>
<feature type="active site" description="Nucleophile" evidence="1">
    <location>
        <position position="149"/>
    </location>
</feature>
<feature type="active site" evidence="1">
    <location>
        <position position="316"/>
    </location>
</feature>
<feature type="active site" evidence="1">
    <location>
        <position position="349"/>
    </location>
</feature>
<feature type="binding site" evidence="1">
    <location>
        <position position="218"/>
    </location>
    <ligand>
        <name>substrate</name>
    </ligand>
</feature>
<feature type="binding site" evidence="1">
    <location>
        <position position="350"/>
    </location>
    <ligand>
        <name>substrate</name>
    </ligand>
</feature>
<feature type="site" description="Important for acyl-CoA specificity" evidence="1">
    <location>
        <position position="186"/>
    </location>
</feature>
<organism>
    <name type="scientific">Stenotrophomonas maltophilia (strain K279a)</name>
    <dbReference type="NCBI Taxonomy" id="522373"/>
    <lineage>
        <taxon>Bacteria</taxon>
        <taxon>Pseudomonadati</taxon>
        <taxon>Pseudomonadota</taxon>
        <taxon>Gammaproteobacteria</taxon>
        <taxon>Lysobacterales</taxon>
        <taxon>Lysobacteraceae</taxon>
        <taxon>Stenotrophomonas</taxon>
        <taxon>Stenotrophomonas maltophilia group</taxon>
    </lineage>
</organism>
<reference key="1">
    <citation type="journal article" date="2008" name="Genome Biol.">
        <title>The complete genome, comparative and functional analysis of Stenotrophomonas maltophilia reveals an organism heavily shielded by drug resistance determinants.</title>
        <authorList>
            <person name="Crossman L.C."/>
            <person name="Gould V.C."/>
            <person name="Dow J.M."/>
            <person name="Vernikos G.S."/>
            <person name="Okazaki A."/>
            <person name="Sebaihia M."/>
            <person name="Saunders D."/>
            <person name="Arrowsmith C."/>
            <person name="Carver T."/>
            <person name="Peters N."/>
            <person name="Adlem E."/>
            <person name="Kerhornou A."/>
            <person name="Lord A."/>
            <person name="Murphy L."/>
            <person name="Seeger K."/>
            <person name="Squares R."/>
            <person name="Rutter S."/>
            <person name="Quail M.A."/>
            <person name="Rajandream M.A."/>
            <person name="Harris D."/>
            <person name="Churcher C."/>
            <person name="Bentley S.D."/>
            <person name="Parkhill J."/>
            <person name="Thomson N.R."/>
            <person name="Avison M.B."/>
        </authorList>
    </citation>
    <scope>NUCLEOTIDE SEQUENCE [LARGE SCALE GENOMIC DNA]</scope>
    <source>
        <strain>K279a</strain>
    </source>
</reference>
<accession>B2FMC1</accession>
<proteinExistence type="inferred from homology"/>